<name>PIT1_MOUSE</name>
<organism>
    <name type="scientific">Mus musculus</name>
    <name type="common">Mouse</name>
    <dbReference type="NCBI Taxonomy" id="10090"/>
    <lineage>
        <taxon>Eukaryota</taxon>
        <taxon>Metazoa</taxon>
        <taxon>Chordata</taxon>
        <taxon>Craniata</taxon>
        <taxon>Vertebrata</taxon>
        <taxon>Euteleostomi</taxon>
        <taxon>Mammalia</taxon>
        <taxon>Eutheria</taxon>
        <taxon>Euarchontoglires</taxon>
        <taxon>Glires</taxon>
        <taxon>Rodentia</taxon>
        <taxon>Myomorpha</taxon>
        <taxon>Muroidea</taxon>
        <taxon>Muridae</taxon>
        <taxon>Murinae</taxon>
        <taxon>Mus</taxon>
        <taxon>Mus</taxon>
    </lineage>
</organism>
<comment type="function">
    <text evidence="1">Transcription factor involved in the specification of the lactotrope, somatotrope, and thyrotrope phenotypes in the developing anterior pituitary. Activates growth hormone and prolactin genes. Specifically binds to the consensus sequence 5'-TAAAT-3'.</text>
</comment>
<comment type="subunit">
    <text evidence="1">Interacts with PITX1. Interacts with LHX3. Interacts with ELK1.</text>
</comment>
<comment type="subcellular location">
    <subcellularLocation>
        <location evidence="1">Nucleus</location>
    </subcellularLocation>
</comment>
<comment type="alternative products">
    <event type="alternative splicing"/>
    <isoform>
        <id>Q00286-1</id>
        <name>1</name>
        <name>Pit-1</name>
        <sequence type="displayed"/>
    </isoform>
    <isoform>
        <id>Q00286-2</id>
        <name>2</name>
        <name>Pit-1T</name>
        <sequence type="described" ref="VSP_012550"/>
    </isoform>
    <isoform>
        <id>Q00286-3</id>
        <name>3</name>
        <name>Pit-1a</name>
        <name>Pit-1 beta</name>
        <sequence type="described" ref="VSP_012551"/>
    </isoform>
</comment>
<comment type="domain">
    <text evidence="1">The 9aaTAD motif is a transactivation domain present in a large number of yeast and animal transcription factors.</text>
</comment>
<comment type="disease">
    <text evidence="4">Defects in Pou1f1 are the cause of the dwarf (dw) phenotype which interrupts the normal development of the anterior pituitary gland, resulting in the loss of expression of growth hormone, prolactin and thyroid-stimulating hormone, and hypoplasia of their respective cell types.</text>
</comment>
<comment type="miscellaneous">
    <molecule>Isoform 3</molecule>
    <text evidence="5">Unable to transactivate. Only about 1/7 as abundant as isoform 1.</text>
</comment>
<comment type="similarity">
    <text evidence="5">Belongs to the POU transcription factor family. Class-1 subfamily.</text>
</comment>
<accession>Q00286</accession>
<keyword id="KW-0010">Activator</keyword>
<keyword id="KW-0025">Alternative splicing</keyword>
<keyword id="KW-0225">Disease variant</keyword>
<keyword id="KW-0238">DNA-binding</keyword>
<keyword id="KW-0371">Homeobox</keyword>
<keyword id="KW-0539">Nucleus</keyword>
<keyword id="KW-1185">Reference proteome</keyword>
<keyword id="KW-0804">Transcription</keyword>
<keyword id="KW-0805">Transcription regulation</keyword>
<feature type="chain" id="PRO_0000100699" description="Pituitary-specific positive transcription factor 1">
    <location>
        <begin position="1"/>
        <end position="291"/>
    </location>
</feature>
<feature type="domain" description="POU-specific" evidence="3">
    <location>
        <begin position="124"/>
        <end position="198"/>
    </location>
</feature>
<feature type="DNA-binding region" description="Homeobox" evidence="2">
    <location>
        <begin position="214"/>
        <end position="273"/>
    </location>
</feature>
<feature type="short sequence motif" description="9aaTAD" evidence="1">
    <location>
        <begin position="5"/>
        <end position="13"/>
    </location>
</feature>
<feature type="splice variant" id="VSP_012550" description="In isoform 2." evidence="5">
    <original>A</original>
    <variation>GLHTYFSMTTMGNTA</variation>
    <location>
        <position position="48"/>
    </location>
</feature>
<feature type="splice variant" id="VSP_012551" description="In isoform 3." evidence="5">
    <original>A</original>
    <variation>VPSILSLIQTPKCLHTYFSMTTMGNTA</variation>
    <location>
        <position position="48"/>
    </location>
</feature>
<feature type="sequence variant" description="In dw." evidence="4">
    <original>W</original>
    <variation>C</variation>
    <location>
        <position position="261"/>
    </location>
</feature>
<gene>
    <name type="primary">Pou1f1</name>
    <name type="synonym">Pit-1</name>
    <name type="synonym">Pit1</name>
</gene>
<evidence type="ECO:0000250" key="1">
    <source>
        <dbReference type="UniProtKB" id="P28069"/>
    </source>
</evidence>
<evidence type="ECO:0000255" key="2">
    <source>
        <dbReference type="PROSITE-ProRule" id="PRU00108"/>
    </source>
</evidence>
<evidence type="ECO:0000255" key="3">
    <source>
        <dbReference type="PROSITE-ProRule" id="PRU00530"/>
    </source>
</evidence>
<evidence type="ECO:0000269" key="4">
    <source>
    </source>
</evidence>
<evidence type="ECO:0000305" key="5"/>
<sequence length="291" mass="32885">MSCQSFTSADTFITLNSDASAALPLRMHHSAAECLPASNHATNVMSTATGLHYSVPSCHYGNQPSTYGVMAGSLTPCLYKFPDHTLSHGFPPLHQPLLAEDPAASEFKQELRRKSKLVEEPIDMDSPEIRELEQFANEFKVRRIKLGYTQTNVGEALAAVHGSEFSQTTICRFENLQLSFKNACKLKAILSKWLEEAEQVGALYNEKVGANERKRKRRTTISVAAKDALERHFGEHSKPSSQEIMRMAEELNLEKEVVRVWFCNRRQREKRVKTSLNQSLFSISKEHLECR</sequence>
<protein>
    <recommendedName>
        <fullName>Pituitary-specific positive transcription factor 1</fullName>
        <shortName>PIT-1</shortName>
    </recommendedName>
    <alternativeName>
        <fullName>Growth hormone factor 1</fullName>
        <shortName>GHF-1</shortName>
    </alternativeName>
</protein>
<proteinExistence type="evidence at protein level"/>
<dbReference type="EMBL" id="D12885">
    <property type="protein sequence ID" value="BAA02289.1"/>
    <property type="molecule type" value="mRNA"/>
</dbReference>
<dbReference type="EMBL" id="X57512">
    <property type="protein sequence ID" value="CAA40737.1"/>
    <property type="molecule type" value="mRNA"/>
</dbReference>
<dbReference type="EMBL" id="BC061213">
    <property type="protein sequence ID" value="AAH61213.1"/>
    <property type="molecule type" value="mRNA"/>
</dbReference>
<dbReference type="CCDS" id="CCDS57033.1">
    <molecule id="Q00286-1"/>
</dbReference>
<dbReference type="PIR" id="S11663">
    <property type="entry name" value="S11663"/>
</dbReference>
<dbReference type="RefSeq" id="NP_032875.1">
    <molecule id="Q00286-1"/>
    <property type="nucleotide sequence ID" value="NM_008849.6"/>
</dbReference>
<dbReference type="SMR" id="Q00286"/>
<dbReference type="DIP" id="DIP-60278N"/>
<dbReference type="FunCoup" id="Q00286">
    <property type="interactions" value="1187"/>
</dbReference>
<dbReference type="IntAct" id="Q00286">
    <property type="interactions" value="1"/>
</dbReference>
<dbReference type="STRING" id="10090.ENSMUSP00000135113"/>
<dbReference type="PhosphoSitePlus" id="Q00286"/>
<dbReference type="PaxDb" id="10090-ENSMUSP00000004964"/>
<dbReference type="Antibodypedia" id="15685">
    <property type="antibodies" value="93 antibodies from 21 providers"/>
</dbReference>
<dbReference type="DNASU" id="18736"/>
<dbReference type="Ensembl" id="ENSMUST00000176330.8">
    <molecule id="Q00286-1"/>
    <property type="protein sequence ID" value="ENSMUSP00000135113.2"/>
    <property type="gene ID" value="ENSMUSG00000004842.20"/>
</dbReference>
<dbReference type="GeneID" id="18736"/>
<dbReference type="KEGG" id="mmu:18736"/>
<dbReference type="UCSC" id="uc007zqi.1">
    <molecule id="Q00286-1"/>
    <property type="organism name" value="mouse"/>
</dbReference>
<dbReference type="AGR" id="MGI:97588"/>
<dbReference type="CTD" id="5449"/>
<dbReference type="MGI" id="MGI:97588">
    <property type="gene designation" value="Pou1f1"/>
</dbReference>
<dbReference type="VEuPathDB" id="HostDB:ENSMUSG00000004842"/>
<dbReference type="eggNOG" id="KOG3802">
    <property type="taxonomic scope" value="Eukaryota"/>
</dbReference>
<dbReference type="GeneTree" id="ENSGT00940000158913"/>
<dbReference type="HOGENOM" id="CLU_882684_0_0_1"/>
<dbReference type="InParanoid" id="Q00286"/>
<dbReference type="OMA" id="TSHAHGM"/>
<dbReference type="OrthoDB" id="17262at9989"/>
<dbReference type="PhylomeDB" id="Q00286"/>
<dbReference type="BioGRID-ORCS" id="18736">
    <property type="hits" value="3 hits in 77 CRISPR screens"/>
</dbReference>
<dbReference type="ChiTaRS" id="Pou1f1">
    <property type="organism name" value="mouse"/>
</dbReference>
<dbReference type="PRO" id="PR:Q00286"/>
<dbReference type="Proteomes" id="UP000000589">
    <property type="component" value="Chromosome 16"/>
</dbReference>
<dbReference type="RNAct" id="Q00286">
    <property type="molecule type" value="protein"/>
</dbReference>
<dbReference type="Bgee" id="ENSMUSG00000004842">
    <property type="expression patterns" value="Expressed in female urethra and 9 other cell types or tissues"/>
</dbReference>
<dbReference type="ExpressionAtlas" id="Q00286">
    <property type="expression patterns" value="baseline and differential"/>
</dbReference>
<dbReference type="GO" id="GO:0005634">
    <property type="term" value="C:nucleus"/>
    <property type="evidence" value="ECO:0000314"/>
    <property type="project" value="MGI"/>
</dbReference>
<dbReference type="GO" id="GO:0005667">
    <property type="term" value="C:transcription regulator complex"/>
    <property type="evidence" value="ECO:0000305"/>
    <property type="project" value="MGI"/>
</dbReference>
<dbReference type="GO" id="GO:0003682">
    <property type="term" value="F:chromatin binding"/>
    <property type="evidence" value="ECO:0000314"/>
    <property type="project" value="MGI"/>
</dbReference>
<dbReference type="GO" id="GO:0003677">
    <property type="term" value="F:DNA binding"/>
    <property type="evidence" value="ECO:0000314"/>
    <property type="project" value="MGI"/>
</dbReference>
<dbReference type="GO" id="GO:0001228">
    <property type="term" value="F:DNA-binding transcription activator activity, RNA polymerase II-specific"/>
    <property type="evidence" value="ECO:0000314"/>
    <property type="project" value="MGI"/>
</dbReference>
<dbReference type="GO" id="GO:0003700">
    <property type="term" value="F:DNA-binding transcription factor activity"/>
    <property type="evidence" value="ECO:0000314"/>
    <property type="project" value="MGI"/>
</dbReference>
<dbReference type="GO" id="GO:0000981">
    <property type="term" value="F:DNA-binding transcription factor activity, RNA polymerase II-specific"/>
    <property type="evidence" value="ECO:0000250"/>
    <property type="project" value="UniProtKB"/>
</dbReference>
<dbReference type="GO" id="GO:0106222">
    <property type="term" value="F:lncRNA binding"/>
    <property type="evidence" value="ECO:0000266"/>
    <property type="project" value="MGI"/>
</dbReference>
<dbReference type="GO" id="GO:0043565">
    <property type="term" value="F:sequence-specific DNA binding"/>
    <property type="evidence" value="ECO:0000314"/>
    <property type="project" value="MGI"/>
</dbReference>
<dbReference type="GO" id="GO:0030183">
    <property type="term" value="P:B cell differentiation"/>
    <property type="evidence" value="ECO:0000315"/>
    <property type="project" value="MGI"/>
</dbReference>
<dbReference type="GO" id="GO:0001708">
    <property type="term" value="P:cell fate specification"/>
    <property type="evidence" value="ECO:0000314"/>
    <property type="project" value="MGI"/>
</dbReference>
<dbReference type="GO" id="GO:0008283">
    <property type="term" value="P:cell population proliferation"/>
    <property type="evidence" value="ECO:0000315"/>
    <property type="project" value="MGI"/>
</dbReference>
<dbReference type="GO" id="GO:0008340">
    <property type="term" value="P:determination of adult lifespan"/>
    <property type="evidence" value="ECO:0000315"/>
    <property type="project" value="MGI"/>
</dbReference>
<dbReference type="GO" id="GO:0032959">
    <property type="term" value="P:inositol trisphosphate biosynthetic process"/>
    <property type="evidence" value="ECO:0000315"/>
    <property type="project" value="MGI"/>
</dbReference>
<dbReference type="GO" id="GO:0000122">
    <property type="term" value="P:negative regulation of transcription by RNA polymerase II"/>
    <property type="evidence" value="ECO:0000266"/>
    <property type="project" value="MGI"/>
</dbReference>
<dbReference type="GO" id="GO:0021983">
    <property type="term" value="P:pituitary gland development"/>
    <property type="evidence" value="ECO:0000315"/>
    <property type="project" value="MGI"/>
</dbReference>
<dbReference type="GO" id="GO:0008284">
    <property type="term" value="P:positive regulation of cell population proliferation"/>
    <property type="evidence" value="ECO:0000315"/>
    <property type="project" value="MGI"/>
</dbReference>
<dbReference type="GO" id="GO:0045893">
    <property type="term" value="P:positive regulation of DNA-templated transcription"/>
    <property type="evidence" value="ECO:0000314"/>
    <property type="project" value="MGI"/>
</dbReference>
<dbReference type="GO" id="GO:0032962">
    <property type="term" value="P:positive regulation of inositol trisphosphate biosynthetic process"/>
    <property type="evidence" value="ECO:0000315"/>
    <property type="project" value="MGI"/>
</dbReference>
<dbReference type="GO" id="GO:0040018">
    <property type="term" value="P:positive regulation of multicellular organism growth"/>
    <property type="evidence" value="ECO:0000315"/>
    <property type="project" value="MGI"/>
</dbReference>
<dbReference type="GO" id="GO:0045944">
    <property type="term" value="P:positive regulation of transcription by RNA polymerase II"/>
    <property type="evidence" value="ECO:0000314"/>
    <property type="project" value="MGI"/>
</dbReference>
<dbReference type="GO" id="GO:0043567">
    <property type="term" value="P:regulation of insulin-like growth factor receptor signaling pathway"/>
    <property type="evidence" value="ECO:0000315"/>
    <property type="project" value="MGI"/>
</dbReference>
<dbReference type="GO" id="GO:0060133">
    <property type="term" value="P:somatotropin secreting cell development"/>
    <property type="evidence" value="ECO:0000315"/>
    <property type="project" value="MGI"/>
</dbReference>
<dbReference type="GO" id="GO:0060126">
    <property type="term" value="P:somatotropin secreting cell differentiation"/>
    <property type="evidence" value="ECO:0000315"/>
    <property type="project" value="MGI"/>
</dbReference>
<dbReference type="CDD" id="cd00086">
    <property type="entry name" value="homeodomain"/>
    <property type="match status" value="1"/>
</dbReference>
<dbReference type="FunFam" id="1.10.10.60:FF:000150">
    <property type="entry name" value="POU domain protein"/>
    <property type="match status" value="1"/>
</dbReference>
<dbReference type="FunFam" id="1.10.260.40:FF:000007">
    <property type="entry name" value="POU domain protein"/>
    <property type="match status" value="1"/>
</dbReference>
<dbReference type="Gene3D" id="1.10.10.60">
    <property type="entry name" value="Homeodomain-like"/>
    <property type="match status" value="1"/>
</dbReference>
<dbReference type="Gene3D" id="1.10.260.40">
    <property type="entry name" value="lambda repressor-like DNA-binding domains"/>
    <property type="match status" value="1"/>
</dbReference>
<dbReference type="InterPro" id="IPR001356">
    <property type="entry name" value="HD"/>
</dbReference>
<dbReference type="InterPro" id="IPR017970">
    <property type="entry name" value="Homeobox_CS"/>
</dbReference>
<dbReference type="InterPro" id="IPR009057">
    <property type="entry name" value="Homeodomain-like_sf"/>
</dbReference>
<dbReference type="InterPro" id="IPR010982">
    <property type="entry name" value="Lambda_DNA-bd_dom_sf"/>
</dbReference>
<dbReference type="InterPro" id="IPR013847">
    <property type="entry name" value="POU"/>
</dbReference>
<dbReference type="InterPro" id="IPR000327">
    <property type="entry name" value="POU_dom"/>
</dbReference>
<dbReference type="InterPro" id="IPR050255">
    <property type="entry name" value="POU_domain_TF"/>
</dbReference>
<dbReference type="PANTHER" id="PTHR11636:SF84">
    <property type="entry name" value="NETRIN-1-RELATED"/>
    <property type="match status" value="1"/>
</dbReference>
<dbReference type="PANTHER" id="PTHR11636">
    <property type="entry name" value="POU DOMAIN"/>
    <property type="match status" value="1"/>
</dbReference>
<dbReference type="Pfam" id="PF00046">
    <property type="entry name" value="Homeodomain"/>
    <property type="match status" value="1"/>
</dbReference>
<dbReference type="Pfam" id="PF00157">
    <property type="entry name" value="Pou"/>
    <property type="match status" value="1"/>
</dbReference>
<dbReference type="PRINTS" id="PR00028">
    <property type="entry name" value="POUDOMAIN"/>
</dbReference>
<dbReference type="SMART" id="SM00389">
    <property type="entry name" value="HOX"/>
    <property type="match status" value="1"/>
</dbReference>
<dbReference type="SMART" id="SM00352">
    <property type="entry name" value="POU"/>
    <property type="match status" value="1"/>
</dbReference>
<dbReference type="SUPFAM" id="SSF46689">
    <property type="entry name" value="Homeodomain-like"/>
    <property type="match status" value="1"/>
</dbReference>
<dbReference type="SUPFAM" id="SSF47413">
    <property type="entry name" value="lambda repressor-like DNA-binding domains"/>
    <property type="match status" value="1"/>
</dbReference>
<dbReference type="PROSITE" id="PS00027">
    <property type="entry name" value="HOMEOBOX_1"/>
    <property type="match status" value="1"/>
</dbReference>
<dbReference type="PROSITE" id="PS50071">
    <property type="entry name" value="HOMEOBOX_2"/>
    <property type="match status" value="1"/>
</dbReference>
<dbReference type="PROSITE" id="PS00035">
    <property type="entry name" value="POU_1"/>
    <property type="match status" value="1"/>
</dbReference>
<dbReference type="PROSITE" id="PS00465">
    <property type="entry name" value="POU_2"/>
    <property type="match status" value="1"/>
</dbReference>
<dbReference type="PROSITE" id="PS51179">
    <property type="entry name" value="POU_3"/>
    <property type="match status" value="1"/>
</dbReference>
<reference key="1">
    <citation type="journal article" date="1990" name="Nature">
        <title>Dwarf locus mutants lacking three pituitary cell types result from mutations in the POU-domain gene pit-1.</title>
        <authorList>
            <person name="Li S."/>
            <person name="Crenshaw E.B. III"/>
            <person name="Rawson E.J."/>
            <person name="Simmons D.M."/>
            <person name="Swanson L.W."/>
            <person name="Rosenfeld M.G."/>
        </authorList>
    </citation>
    <scope>NUCLEOTIDE SEQUENCE [MRNA] (ISOFORM 1)</scope>
    <scope>VARIANT DW CYS-261</scope>
    <scope>DISEASE</scope>
</reference>
<reference key="2">
    <citation type="journal article" date="2004" name="Genome Res.">
        <title>The status, quality, and expansion of the NIH full-length cDNA project: the Mammalian Gene Collection (MGC).</title>
        <authorList>
            <consortium name="The MGC Project Team"/>
        </authorList>
    </citation>
    <scope>NUCLEOTIDE SEQUENCE [LARGE SCALE MRNA] (ISOFORM 1)</scope>
    <source>
        <tissue>Pituitary</tissue>
    </source>
</reference>
<reference key="3">
    <citation type="journal article" date="1992" name="Nucleic Acids Res.">
        <title>An alternatively spliced Pit-1 isoform altered in its ability to trans-activate.</title>
        <authorList>
            <person name="Morris A.E."/>
            <person name="Kloss B."/>
            <person name="McChesney R.E."/>
            <person name="Bancroft C."/>
            <person name="Chasin L.A."/>
        </authorList>
    </citation>
    <scope>ALTERNATIVE SPLICING (ISOFORM 3)</scope>
    <source>
        <tissue>Pituitary</tissue>
    </source>
</reference>
<reference key="4">
    <citation type="journal article" date="1993" name="J. Biol. Chem.">
        <title>A thyrotrope-specific variant of Pit-1 transactivates the thyrotropin beta promoter.</title>
        <authorList>
            <person name="Haugen B.R."/>
            <person name="Wood W.M."/>
            <person name="Gordon D.F."/>
            <person name="Ridgway E.C."/>
        </authorList>
    </citation>
    <scope>ALTERNATIVE SPLICING (ISOFORM 2)</scope>
</reference>